<evidence type="ECO:0000250" key="1"/>
<evidence type="ECO:0000269" key="2">
    <source>
    </source>
</evidence>
<evidence type="ECO:0000305" key="3"/>
<reference key="1">
    <citation type="journal article" date="2002" name="Nature">
        <title>The genome sequence and structure of rice chromosome 1.</title>
        <authorList>
            <person name="Sasaki T."/>
            <person name="Matsumoto T."/>
            <person name="Yamamoto K."/>
            <person name="Sakata K."/>
            <person name="Baba T."/>
            <person name="Katayose Y."/>
            <person name="Wu J."/>
            <person name="Niimura Y."/>
            <person name="Cheng Z."/>
            <person name="Nagamura Y."/>
            <person name="Antonio B.A."/>
            <person name="Kanamori H."/>
            <person name="Hosokawa S."/>
            <person name="Masukawa M."/>
            <person name="Arikawa K."/>
            <person name="Chiden Y."/>
            <person name="Hayashi M."/>
            <person name="Okamoto M."/>
            <person name="Ando T."/>
            <person name="Aoki H."/>
            <person name="Arita K."/>
            <person name="Hamada M."/>
            <person name="Harada C."/>
            <person name="Hijishita S."/>
            <person name="Honda M."/>
            <person name="Ichikawa Y."/>
            <person name="Idonuma A."/>
            <person name="Iijima M."/>
            <person name="Ikeda M."/>
            <person name="Ikeno M."/>
            <person name="Ito S."/>
            <person name="Ito T."/>
            <person name="Ito Y."/>
            <person name="Ito Y."/>
            <person name="Iwabuchi A."/>
            <person name="Kamiya K."/>
            <person name="Karasawa W."/>
            <person name="Katagiri S."/>
            <person name="Kikuta A."/>
            <person name="Kobayashi N."/>
            <person name="Kono I."/>
            <person name="Machita K."/>
            <person name="Maehara T."/>
            <person name="Mizuno H."/>
            <person name="Mizubayashi T."/>
            <person name="Mukai Y."/>
            <person name="Nagasaki H."/>
            <person name="Nakashima M."/>
            <person name="Nakama Y."/>
            <person name="Nakamichi Y."/>
            <person name="Nakamura M."/>
            <person name="Namiki N."/>
            <person name="Negishi M."/>
            <person name="Ohta I."/>
            <person name="Ono N."/>
            <person name="Saji S."/>
            <person name="Sakai K."/>
            <person name="Shibata M."/>
            <person name="Shimokawa T."/>
            <person name="Shomura A."/>
            <person name="Song J."/>
            <person name="Takazaki Y."/>
            <person name="Terasawa K."/>
            <person name="Tsuji K."/>
            <person name="Waki K."/>
            <person name="Yamagata H."/>
            <person name="Yamane H."/>
            <person name="Yoshiki S."/>
            <person name="Yoshihara R."/>
            <person name="Yukawa K."/>
            <person name="Zhong H."/>
            <person name="Iwama H."/>
            <person name="Endo T."/>
            <person name="Ito H."/>
            <person name="Hahn J.H."/>
            <person name="Kim H.-I."/>
            <person name="Eun M.-Y."/>
            <person name="Yano M."/>
            <person name="Jiang J."/>
            <person name="Gojobori T."/>
        </authorList>
    </citation>
    <scope>NUCLEOTIDE SEQUENCE [LARGE SCALE GENOMIC DNA]</scope>
    <source>
        <strain>cv. Nipponbare</strain>
    </source>
</reference>
<reference key="2">
    <citation type="journal article" date="2005" name="Nature">
        <title>The map-based sequence of the rice genome.</title>
        <authorList>
            <consortium name="International rice genome sequencing project (IRGSP)"/>
        </authorList>
    </citation>
    <scope>NUCLEOTIDE SEQUENCE [LARGE SCALE GENOMIC DNA]</scope>
    <source>
        <strain>cv. Nipponbare</strain>
    </source>
</reference>
<reference key="3">
    <citation type="journal article" date="2008" name="Nucleic Acids Res.">
        <title>The rice annotation project database (RAP-DB): 2008 update.</title>
        <authorList>
            <consortium name="The rice annotation project (RAP)"/>
        </authorList>
    </citation>
    <scope>GENOME REANNOTATION</scope>
    <source>
        <strain>cv. Nipponbare</strain>
    </source>
</reference>
<reference key="4">
    <citation type="journal article" date="2013" name="Rice">
        <title>Improvement of the Oryza sativa Nipponbare reference genome using next generation sequence and optical map data.</title>
        <authorList>
            <person name="Kawahara Y."/>
            <person name="de la Bastide M."/>
            <person name="Hamilton J.P."/>
            <person name="Kanamori H."/>
            <person name="McCombie W.R."/>
            <person name="Ouyang S."/>
            <person name="Schwartz D.C."/>
            <person name="Tanaka T."/>
            <person name="Wu J."/>
            <person name="Zhou S."/>
            <person name="Childs K.L."/>
            <person name="Davidson R.M."/>
            <person name="Lin H."/>
            <person name="Quesada-Ocampo L."/>
            <person name="Vaillancourt B."/>
            <person name="Sakai H."/>
            <person name="Lee S.S."/>
            <person name="Kim J."/>
            <person name="Numa H."/>
            <person name="Itoh T."/>
            <person name="Buell C.R."/>
            <person name="Matsumoto T."/>
        </authorList>
    </citation>
    <scope>GENOME REANNOTATION</scope>
    <source>
        <strain>cv. Nipponbare</strain>
    </source>
</reference>
<reference key="5">
    <citation type="journal article" date="2003" name="Science">
        <title>Collection, mapping, and annotation of over 28,000 cDNA clones from japonica rice.</title>
        <authorList>
            <consortium name="The rice full-length cDNA consortium"/>
        </authorList>
    </citation>
    <scope>NUCLEOTIDE SEQUENCE [LARGE SCALE MRNA] OF 1-456 AND 588-1183</scope>
    <source>
        <strain>cv. Nipponbare</strain>
    </source>
</reference>
<reference key="6">
    <citation type="journal article" date="2008" name="BMC Genomics">
        <title>Genome-wide identification, organization and phylogenetic analysis of dicer-like, argonaute and RNA-dependent RNA polymerase gene families and their expression analysis during reproductive development and stress in rice.</title>
        <authorList>
            <person name="Kapoor M."/>
            <person name="Arora R."/>
            <person name="Lama T."/>
            <person name="Nijhawan A."/>
            <person name="Khurana J.P."/>
            <person name="Tyagi A.K."/>
            <person name="Kapoor S."/>
        </authorList>
    </citation>
    <scope>TISSUE SPECIFICITY</scope>
    <scope>GENE FAMILY</scope>
    <scope>NOMENCLATURE</scope>
</reference>
<gene>
    <name type="primary">RDR4</name>
    <name type="ordered locus">Os01g0198000</name>
    <name type="ordered locus">LOC_Os01g10140</name>
    <name type="ORF">B1046G12.14</name>
    <name type="ORF">P0419B01.26</name>
</gene>
<feature type="chain" id="PRO_0000378448" description="Probable RNA-dependent RNA polymerase 4">
    <location>
        <begin position="1"/>
        <end position="1183"/>
    </location>
</feature>
<proteinExistence type="evidence at transcript level"/>
<organism>
    <name type="scientific">Oryza sativa subsp. japonica</name>
    <name type="common">Rice</name>
    <dbReference type="NCBI Taxonomy" id="39947"/>
    <lineage>
        <taxon>Eukaryota</taxon>
        <taxon>Viridiplantae</taxon>
        <taxon>Streptophyta</taxon>
        <taxon>Embryophyta</taxon>
        <taxon>Tracheophyta</taxon>
        <taxon>Spermatophyta</taxon>
        <taxon>Magnoliopsida</taxon>
        <taxon>Liliopsida</taxon>
        <taxon>Poales</taxon>
        <taxon>Poaceae</taxon>
        <taxon>BOP clade</taxon>
        <taxon>Oryzoideae</taxon>
        <taxon>Oryzeae</taxon>
        <taxon>Oryzinae</taxon>
        <taxon>Oryza</taxon>
        <taxon>Oryza sativa</taxon>
    </lineage>
</organism>
<sequence>MNPHGGGNQMREPALPAAVGAELERLEARLGQLACAEARRQLAELGEPAAARVLRAIGEARQVRTLSGFIRHMANQERMKRNARGIPTAHSAACISGPCREEESISTPLYYNEVQMDAQTPNDMVEVGSPNQQMPLRLHDNGGSVGHIARVVPDLANPAVGSPYGRISSVLLQNQNCVEGYTPSRGMVSPASNQVGSPGHRMPSGLQRHMEIDSPIQPIVSTPERVSTPSPVRDLSRCVENMAGPSGSPPCPIWVMPQIPPAICPDTTNVLREVVSPQMLALGELEFRKIFMIFAYLSWNKKGVKPPLSTPKSSKIEDVLSVDSIRSLKSMSMAQFESRIWSTFGHDNISSSDRAKNLDSGPGMSKVYHCNVEIRGGTVVKIFKGPYIENRRTHLQKVLGDDNVLVVKFMEISSDTETDLSTYLEHYHKVAEEGIVLGLRCYRFFLYKDGGKENKMKEENREEENKKCTSSVRCYFVRTESGWNMDEPYILSGRTIGQARDLFMHIRTVLTLAKYMLRFALIVSKTITLDVDLSEVLVKLIDDEPCLDEHGKEVFRDGERLIHTDGTGLISEDLAQKCTYSNSKGKLLEPQDIVDCAASKLMGSNNTTEYPLLIQLRLFYNGSAVKGTVLVDKRLPPRTIHIRPSMLKIKTYPELSGVQSVNSLDIVSARNAKKSLSGVQSVNSFEIVSTSNRSGRTFTSNNLIALLHYGGVPEEFFMELLQTAIEEADNARFDYAGALNIAFNYADMEDSMPARMILSGIPLEESYLQSRLDFLSLLERKGIKNGKIPIDDCYYLMGTADPTGKLGPNEVCVILDYGQVSGDVLVYKYPGLHPGDIHVLKATYSSDIEKVVGNSKHAILFPTTGQRSLADEMANSDFDGDIYWVSLNPKLLEHFKPSKPWVPAITPNGTKQKGPEDFNESELERVLFHEFLKTRFAPSYARATAATNWLVYMDRLLTVSLDESEKKLIEKKMLKLVDLYYLALDAPKMGNKVNIPRDLMVKQYPHFMDRSPSYHSSSILGKIYDKAGDPKPLRSDNVQPTSISSLPCFAERDVPPAIKQLWQHRYNEYLADSSLLYAEEADEEEKKIKFQELYEKYKHLLYGASEFEETPRDLDDVFSEACAIYQIAYEKARSANNVARCGFAWKVAGRALCHFYTVKNEGNAVVCSLQLLRNFRFTKKYRK</sequence>
<dbReference type="EC" id="2.7.7.48"/>
<dbReference type="EMBL" id="AP003200">
    <property type="protein sequence ID" value="BAD73222.1"/>
    <property type="status" value="ALT_SEQ"/>
    <property type="molecule type" value="Genomic_DNA"/>
</dbReference>
<dbReference type="EMBL" id="AP003244">
    <property type="protein sequence ID" value="BAD73329.1"/>
    <property type="status" value="ALT_SEQ"/>
    <property type="molecule type" value="Genomic_DNA"/>
</dbReference>
<dbReference type="EMBL" id="AP008207">
    <property type="protein sequence ID" value="BAF04218.1"/>
    <property type="status" value="ALT_SEQ"/>
    <property type="molecule type" value="Genomic_DNA"/>
</dbReference>
<dbReference type="EMBL" id="AP014957">
    <property type="status" value="NOT_ANNOTATED_CDS"/>
    <property type="molecule type" value="Genomic_DNA"/>
</dbReference>
<dbReference type="EMBL" id="AK064209">
    <property type="protein sequence ID" value="BAG89036.1"/>
    <property type="status" value="ALT_INIT"/>
    <property type="molecule type" value="mRNA"/>
</dbReference>
<dbReference type="EMBL" id="AK119908">
    <property type="status" value="NOT_ANNOTATED_CDS"/>
    <property type="molecule type" value="mRNA"/>
</dbReference>
<dbReference type="RefSeq" id="XP_015624482.1">
    <property type="nucleotide sequence ID" value="XM_015768996.1"/>
</dbReference>
<dbReference type="SMR" id="Q5QMN4"/>
<dbReference type="FunCoup" id="Q5QMN4">
    <property type="interactions" value="62"/>
</dbReference>
<dbReference type="STRING" id="39947.Q5QMN4"/>
<dbReference type="PaxDb" id="39947-Q5QMN4"/>
<dbReference type="EnsemblPlants" id="Os01t0198000-01">
    <property type="protein sequence ID" value="Os01t0198000-01"/>
    <property type="gene ID" value="Os01g0198000"/>
</dbReference>
<dbReference type="Gramene" id="Os01t0198000-01">
    <property type="protein sequence ID" value="Os01t0198000-01"/>
    <property type="gene ID" value="Os01g0198000"/>
</dbReference>
<dbReference type="KEGG" id="dosa:Os01g0198000"/>
<dbReference type="eggNOG" id="KOG0988">
    <property type="taxonomic scope" value="Eukaryota"/>
</dbReference>
<dbReference type="HOGENOM" id="CLU_008367_1_1_1"/>
<dbReference type="InParanoid" id="Q5QMN4"/>
<dbReference type="OrthoDB" id="6513042at2759"/>
<dbReference type="Proteomes" id="UP000000763">
    <property type="component" value="Chromosome 1"/>
</dbReference>
<dbReference type="Proteomes" id="UP000059680">
    <property type="component" value="Chromosome 1"/>
</dbReference>
<dbReference type="GO" id="GO:0031380">
    <property type="term" value="C:nuclear RNA-directed RNA polymerase complex"/>
    <property type="evidence" value="ECO:0000318"/>
    <property type="project" value="GO_Central"/>
</dbReference>
<dbReference type="GO" id="GO:0003723">
    <property type="term" value="F:RNA binding"/>
    <property type="evidence" value="ECO:0007669"/>
    <property type="project" value="UniProtKB-KW"/>
</dbReference>
<dbReference type="GO" id="GO:0003968">
    <property type="term" value="F:RNA-directed RNA polymerase activity"/>
    <property type="evidence" value="ECO:0000318"/>
    <property type="project" value="GO_Central"/>
</dbReference>
<dbReference type="GO" id="GO:0030422">
    <property type="term" value="P:siRNA processing"/>
    <property type="evidence" value="ECO:0000318"/>
    <property type="project" value="GO_Central"/>
</dbReference>
<dbReference type="InterPro" id="IPR007855">
    <property type="entry name" value="RNA-dep_RNA_pol_euk-typ"/>
</dbReference>
<dbReference type="PANTHER" id="PTHR23079">
    <property type="entry name" value="RNA-DEPENDENT RNA POLYMERASE"/>
    <property type="match status" value="1"/>
</dbReference>
<dbReference type="PANTHER" id="PTHR23079:SF55">
    <property type="entry name" value="RNA-DIRECTED RNA POLYMERASE"/>
    <property type="match status" value="1"/>
</dbReference>
<dbReference type="Pfam" id="PF05183">
    <property type="entry name" value="RdRP"/>
    <property type="match status" value="1"/>
</dbReference>
<name>RDR4_ORYSJ</name>
<comment type="function">
    <text evidence="1">Probably involved in the RNA silencing pathway and required for the generation of small interfering RNAs (siRNAs).</text>
</comment>
<comment type="catalytic activity">
    <reaction>
        <text>RNA(n) + a ribonucleoside 5'-triphosphate = RNA(n+1) + diphosphate</text>
        <dbReference type="Rhea" id="RHEA:21248"/>
        <dbReference type="Rhea" id="RHEA-COMP:14527"/>
        <dbReference type="Rhea" id="RHEA-COMP:17342"/>
        <dbReference type="ChEBI" id="CHEBI:33019"/>
        <dbReference type="ChEBI" id="CHEBI:61557"/>
        <dbReference type="ChEBI" id="CHEBI:140395"/>
        <dbReference type="EC" id="2.7.7.48"/>
    </reaction>
</comment>
<comment type="tissue specificity">
    <text evidence="2">Expressed in shoot apical meristem (SAM) and panicles.</text>
</comment>
<comment type="similarity">
    <text evidence="3">Belongs to the RdRP family.</text>
</comment>
<comment type="sequence caution" evidence="3">
    <conflict type="erroneous gene model prediction">
        <sequence resource="EMBL-CDS" id="BAD73222"/>
    </conflict>
</comment>
<comment type="sequence caution" evidence="3">
    <conflict type="erroneous gene model prediction">
        <sequence resource="EMBL-CDS" id="BAD73329"/>
    </conflict>
</comment>
<comment type="sequence caution" evidence="3">
    <conflict type="erroneous gene model prediction">
        <sequence resource="EMBL-CDS" id="BAF04218"/>
    </conflict>
</comment>
<comment type="sequence caution" evidence="3">
    <conflict type="erroneous initiation">
        <sequence resource="EMBL-CDS" id="BAG89036"/>
    </conflict>
</comment>
<keyword id="KW-0548">Nucleotidyltransferase</keyword>
<keyword id="KW-1185">Reference proteome</keyword>
<keyword id="KW-0694">RNA-binding</keyword>
<keyword id="KW-0696">RNA-directed RNA polymerase</keyword>
<keyword id="KW-0943">RNA-mediated gene silencing</keyword>
<keyword id="KW-0808">Transferase</keyword>
<protein>
    <recommendedName>
        <fullName>Probable RNA-dependent RNA polymerase 4</fullName>
        <shortName>OsRDR4</shortName>
        <ecNumber>2.7.7.48</ecNumber>
    </recommendedName>
</protein>
<accession>Q5QMN4</accession>